<sequence>MAVWHSANGKVYLPPSTPVARVQSTDEYIQRTNIYYHAFSDRLLTVGHPYFNVYNITGDKLEVPKVSGNQHRVFRLKLPDPNRFALADMSVYNPDKERLVWACRGLEIGRGQPLGVGSTGHPYFNKVKDTENSNAYITFSKDGQNTAFSKDDRLNTSFDPKQIQMFIVGCTPCIGEHWDKAVPCAKNDQQTGLCPPIELKNTYIEDGDMADIGFGNMNFKALQDSRSDVSLDIVNETCKYPDFLKMQNDIYGDACFFYARREQCYARHFFVRGGKTGDDIPGAQIDNGTYKNQFYIPGADGQAQKTIGNAMYFPTVSGSLVSSDAQLFNRPFWLQRAQGHNNGILWANQMFITVVDNTRNTNFSISVYNQAGPLKDVADYNAEQFREYQRHVEEYEISLILQLCKVPLKAEVLAQINAMNSSLLEDWQLGFVPTPDNPIQDTYRYIDSLATRCPDKNPPKEKEDPYKGLHFWDVDLTERLSLDLDQYSLGRKFLFQAGLQHTTVNGTKAVSYKGSNRGTKRKRKN</sequence>
<gene>
    <name evidence="1" type="primary">L1</name>
</gene>
<dbReference type="EMBL" id="D90252">
    <property type="protein sequence ID" value="BAA14300.1"/>
    <property type="molecule type" value="Genomic_DNA"/>
</dbReference>
<dbReference type="PIR" id="G40480">
    <property type="entry name" value="P1WLB5"/>
</dbReference>
<dbReference type="SMR" id="P26537"/>
<dbReference type="Proteomes" id="UP000007669">
    <property type="component" value="Genome"/>
</dbReference>
<dbReference type="GO" id="GO:0042025">
    <property type="term" value="C:host cell nucleus"/>
    <property type="evidence" value="ECO:0007669"/>
    <property type="project" value="UniProtKB-SubCell"/>
</dbReference>
<dbReference type="GO" id="GO:0039620">
    <property type="term" value="C:T=7 icosahedral viral capsid"/>
    <property type="evidence" value="ECO:0007669"/>
    <property type="project" value="UniProtKB-UniRule"/>
</dbReference>
<dbReference type="GO" id="GO:0005198">
    <property type="term" value="F:structural molecule activity"/>
    <property type="evidence" value="ECO:0007669"/>
    <property type="project" value="UniProtKB-UniRule"/>
</dbReference>
<dbReference type="GO" id="GO:0075509">
    <property type="term" value="P:endocytosis involved in viral entry into host cell"/>
    <property type="evidence" value="ECO:0007669"/>
    <property type="project" value="UniProtKB-KW"/>
</dbReference>
<dbReference type="GO" id="GO:0019062">
    <property type="term" value="P:virion attachment to host cell"/>
    <property type="evidence" value="ECO:0007669"/>
    <property type="project" value="UniProtKB-UniRule"/>
</dbReference>
<dbReference type="Gene3D" id="2.60.175.20">
    <property type="entry name" value="Major capsid L1 (late) superfamily, Papillomavirus"/>
    <property type="match status" value="2"/>
</dbReference>
<dbReference type="HAMAP" id="MF_04002">
    <property type="entry name" value="PPV_L1"/>
    <property type="match status" value="1"/>
</dbReference>
<dbReference type="InterPro" id="IPR002210">
    <property type="entry name" value="Capsid_L1_Papillomavir"/>
</dbReference>
<dbReference type="InterPro" id="IPR036973">
    <property type="entry name" value="Capsid_L1_sf_Papillomavir"/>
</dbReference>
<dbReference type="InterPro" id="IPR011222">
    <property type="entry name" value="dsDNA_vir_gr_I_capsid"/>
</dbReference>
<dbReference type="Pfam" id="PF00500">
    <property type="entry name" value="Late_protein_L1"/>
    <property type="match status" value="1"/>
</dbReference>
<dbReference type="PRINTS" id="PR00865">
    <property type="entry name" value="HPVCAPSIDL1"/>
</dbReference>
<dbReference type="SUPFAM" id="SSF88648">
    <property type="entry name" value="Group I dsDNA viruses"/>
    <property type="match status" value="1"/>
</dbReference>
<proteinExistence type="inferred from homology"/>
<organism>
    <name type="scientific">Human papillomavirus type 5b</name>
    <dbReference type="NCBI Taxonomy" id="10599"/>
    <lineage>
        <taxon>Viruses</taxon>
        <taxon>Monodnaviria</taxon>
        <taxon>Shotokuvirae</taxon>
        <taxon>Cossaviricota</taxon>
        <taxon>Papovaviricetes</taxon>
        <taxon>Zurhausenvirales</taxon>
        <taxon>Papillomaviridae</taxon>
        <taxon>Firstpapillomavirinae</taxon>
        <taxon>Betapapillomavirus</taxon>
        <taxon>Betapapillomavirus 1</taxon>
    </lineage>
</organism>
<protein>
    <recommendedName>
        <fullName evidence="1">Major capsid protein L1</fullName>
    </recommendedName>
</protein>
<comment type="function">
    <text evidence="1">Forms an icosahedral capsid with a T=7 symmetry and a 50 nm diameter. The capsid is composed of 72 pentamers linked to each other by disulfide bonds and associated with L2 proteins. Binds to heparan sulfate proteoglycans on cell surface of basal layer keratinocytes to provide initial virion attachment. This binding mediates a conformational change in the virus capsid that facilitates efficient infection. The virion enters the host cell via endocytosis. During virus trafficking, L1 protein dissociates from the viral DNA and the genomic DNA is released to the host nucleus. The virion assembly takes place within the cell nucleus. Encapsulates the genomic DNA together with protein L2.</text>
</comment>
<comment type="subunit">
    <text evidence="1">Self-assembles into homopentamers. The capsid has an icosahedral symmetry and consists of 72 capsomers, with each capsomer being a pentamer of L1. Interacts with the minor capsid protein L2; this interaction is necessary for viral genome encapsidation. Interacts with protein E2; this interaction enhances E2-dependent replication and transcription activation.</text>
</comment>
<comment type="subcellular location">
    <subcellularLocation>
        <location evidence="1">Virion</location>
    </subcellularLocation>
    <subcellularLocation>
        <location evidence="1">Host nucleus</location>
    </subcellularLocation>
</comment>
<comment type="similarity">
    <text evidence="1">Belongs to the papillomaviridae L1 protein family.</text>
</comment>
<accession>P26537</accession>
<reference key="1">
    <citation type="journal article" date="1991" name="Virology">
        <title>A subtype of human papillomavirus 5 (HPV-5b) and its subgenomic segment amplified in a carcinoma: nucleotide sequences and genomic organizations.</title>
        <authorList>
            <person name="Yabe Y."/>
            <person name="Sakai A."/>
            <person name="Hitsumoto T."/>
            <person name="Kato H."/>
            <person name="Ogura H."/>
        </authorList>
    </citation>
    <scope>NUCLEOTIDE SEQUENCE [GENOMIC DNA]</scope>
</reference>
<evidence type="ECO:0000255" key="1">
    <source>
        <dbReference type="HAMAP-Rule" id="MF_04002"/>
    </source>
</evidence>
<organismHost>
    <name type="scientific">Homo sapiens</name>
    <name type="common">Human</name>
    <dbReference type="NCBI Taxonomy" id="9606"/>
</organismHost>
<feature type="chain" id="PRO_0000133488" description="Major capsid protein L1">
    <location>
        <begin position="1"/>
        <end position="525"/>
    </location>
</feature>
<feature type="disulfide bond" description="Interchain (with C-453)" evidence="1">
    <location>
        <position position="184"/>
    </location>
</feature>
<feature type="disulfide bond" description="Interchain (with C-184)" evidence="1">
    <location>
        <position position="453"/>
    </location>
</feature>
<name>VL1_HPV5B</name>
<keyword id="KW-0167">Capsid protein</keyword>
<keyword id="KW-1015">Disulfide bond</keyword>
<keyword id="KW-1048">Host nucleus</keyword>
<keyword id="KW-0945">Host-virus interaction</keyword>
<keyword id="KW-0426">Late protein</keyword>
<keyword id="KW-1145">T=7 icosahedral capsid protein</keyword>
<keyword id="KW-1161">Viral attachment to host cell</keyword>
<keyword id="KW-1162">Viral penetration into host cytoplasm</keyword>
<keyword id="KW-0946">Virion</keyword>
<keyword id="KW-1164">Virus endocytosis by host</keyword>
<keyword id="KW-1160">Virus entry into host cell</keyword>